<accession>B0KAG0</accession>
<evidence type="ECO:0000255" key="1">
    <source>
        <dbReference type="HAMAP-Rule" id="MF_00377"/>
    </source>
</evidence>
<sequence length="443" mass="51385">MYGDHRQIWERIVEVIKSELTPTSYNTWLVHIKPLAIIDDVLFLSTPNTFTKNIINGRYINIIYDAASKATNKLYEIKILSEDEEEYREIKESIEKENLTESTTLSTLNPKYTFDTFVVGNSNKLAHAACLAVAQAPAKAYNPLFIYGGVGLGKTHLMHAIGHFINKHQSGYKIMYVTSETFTNELVNSIKDDKNEEFRNKYRNIDVLLIDDIQFIAKKERTQEEFFHTFNTLYEANKQIVISSDRPPKEIPTLEERLRSRFEWGLIADIQPPDYETRIAILKKKAQTENLNIPDEVLAYVAEKIQSNIRELEGALIRIVAFSNLTKANIDLELAKHALKEIVSNKTREITVKLIQEEVCKYYNIKLEDFRSRKRTKNIAYPRQIAMYLARELTDLSLPKIGEEFGKDHTTVIHAYEKISNEIKQDELLSRQIEELKKRIKGY</sequence>
<feature type="chain" id="PRO_1000122029" description="Chromosomal replication initiator protein DnaA">
    <location>
        <begin position="1"/>
        <end position="443"/>
    </location>
</feature>
<feature type="region of interest" description="Domain I, interacts with DnaA modulators" evidence="1">
    <location>
        <begin position="1"/>
        <end position="73"/>
    </location>
</feature>
<feature type="region of interest" description="Domain II" evidence="1">
    <location>
        <begin position="73"/>
        <end position="106"/>
    </location>
</feature>
<feature type="region of interest" description="Domain III, AAA+ region" evidence="1">
    <location>
        <begin position="107"/>
        <end position="323"/>
    </location>
</feature>
<feature type="region of interest" description="Domain IV, binds dsDNA" evidence="1">
    <location>
        <begin position="324"/>
        <end position="443"/>
    </location>
</feature>
<feature type="binding site" evidence="1">
    <location>
        <position position="151"/>
    </location>
    <ligand>
        <name>ATP</name>
        <dbReference type="ChEBI" id="CHEBI:30616"/>
    </ligand>
</feature>
<feature type="binding site" evidence="1">
    <location>
        <position position="153"/>
    </location>
    <ligand>
        <name>ATP</name>
        <dbReference type="ChEBI" id="CHEBI:30616"/>
    </ligand>
</feature>
<feature type="binding site" evidence="1">
    <location>
        <position position="154"/>
    </location>
    <ligand>
        <name>ATP</name>
        <dbReference type="ChEBI" id="CHEBI:30616"/>
    </ligand>
</feature>
<feature type="binding site" evidence="1">
    <location>
        <position position="155"/>
    </location>
    <ligand>
        <name>ATP</name>
        <dbReference type="ChEBI" id="CHEBI:30616"/>
    </ligand>
</feature>
<reference key="1">
    <citation type="submission" date="2008-01" db="EMBL/GenBank/DDBJ databases">
        <title>Complete sequence of Thermoanaerobacter pseudethanolicus 39E.</title>
        <authorList>
            <person name="Copeland A."/>
            <person name="Lucas S."/>
            <person name="Lapidus A."/>
            <person name="Barry K."/>
            <person name="Glavina del Rio T."/>
            <person name="Dalin E."/>
            <person name="Tice H."/>
            <person name="Pitluck S."/>
            <person name="Bruce D."/>
            <person name="Goodwin L."/>
            <person name="Saunders E."/>
            <person name="Brettin T."/>
            <person name="Detter J.C."/>
            <person name="Han C."/>
            <person name="Schmutz J."/>
            <person name="Larimer F."/>
            <person name="Land M."/>
            <person name="Hauser L."/>
            <person name="Kyrpides N."/>
            <person name="Lykidis A."/>
            <person name="Hemme C."/>
            <person name="Fields M.W."/>
            <person name="He Z."/>
            <person name="Zhou J."/>
            <person name="Richardson P."/>
        </authorList>
    </citation>
    <scope>NUCLEOTIDE SEQUENCE [LARGE SCALE GENOMIC DNA]</scope>
    <source>
        <strain>ATCC 33223 / DSM 2355 / 39E</strain>
    </source>
</reference>
<proteinExistence type="inferred from homology"/>
<keyword id="KW-0067">ATP-binding</keyword>
<keyword id="KW-0963">Cytoplasm</keyword>
<keyword id="KW-0235">DNA replication</keyword>
<keyword id="KW-0238">DNA-binding</keyword>
<keyword id="KW-0446">Lipid-binding</keyword>
<keyword id="KW-0547">Nucleotide-binding</keyword>
<keyword id="KW-1185">Reference proteome</keyword>
<name>DNAA_THEP3</name>
<gene>
    <name evidence="1" type="primary">dnaA</name>
    <name type="ordered locus">Teth39_0001</name>
</gene>
<comment type="function">
    <text evidence="1">Plays an essential role in the initiation and regulation of chromosomal replication. ATP-DnaA binds to the origin of replication (oriC) to initiate formation of the DNA replication initiation complex once per cell cycle. Binds the DnaA box (a 9 base pair repeat at the origin) and separates the double-stranded (ds)DNA. Forms a right-handed helical filament on oriC DNA; dsDNA binds to the exterior of the filament while single-stranded (ss)DNA is stabiized in the filament's interior. The ATP-DnaA-oriC complex binds and stabilizes one strand of the AT-rich DNA unwinding element (DUE), permitting loading of DNA polymerase. After initiation quickly degrades to an ADP-DnaA complex that is not apt for DNA replication. Binds acidic phospholipids.</text>
</comment>
<comment type="subunit">
    <text evidence="1">Oligomerizes as a right-handed, spiral filament on DNA at oriC.</text>
</comment>
<comment type="subcellular location">
    <subcellularLocation>
        <location evidence="1">Cytoplasm</location>
    </subcellularLocation>
</comment>
<comment type="domain">
    <text evidence="1">Domain I is involved in oligomerization and binding regulators, domain II is flexibile and of varying length in different bacteria, domain III forms the AAA+ region, while domain IV binds dsDNA.</text>
</comment>
<comment type="similarity">
    <text evidence="1">Belongs to the DnaA family.</text>
</comment>
<protein>
    <recommendedName>
        <fullName evidence="1">Chromosomal replication initiator protein DnaA</fullName>
    </recommendedName>
</protein>
<dbReference type="EMBL" id="CP000924">
    <property type="protein sequence ID" value="ABY93674.1"/>
    <property type="molecule type" value="Genomic_DNA"/>
</dbReference>
<dbReference type="RefSeq" id="WP_009052052.1">
    <property type="nucleotide sequence ID" value="NC_010321.1"/>
</dbReference>
<dbReference type="SMR" id="B0KAG0"/>
<dbReference type="STRING" id="340099.Teth39_0001"/>
<dbReference type="KEGG" id="tpd:Teth39_0001"/>
<dbReference type="eggNOG" id="COG0593">
    <property type="taxonomic scope" value="Bacteria"/>
</dbReference>
<dbReference type="HOGENOM" id="CLU_026910_3_1_9"/>
<dbReference type="Proteomes" id="UP000002156">
    <property type="component" value="Chromosome"/>
</dbReference>
<dbReference type="GO" id="GO:0005737">
    <property type="term" value="C:cytoplasm"/>
    <property type="evidence" value="ECO:0007669"/>
    <property type="project" value="UniProtKB-SubCell"/>
</dbReference>
<dbReference type="GO" id="GO:0005886">
    <property type="term" value="C:plasma membrane"/>
    <property type="evidence" value="ECO:0007669"/>
    <property type="project" value="TreeGrafter"/>
</dbReference>
<dbReference type="GO" id="GO:0005524">
    <property type="term" value="F:ATP binding"/>
    <property type="evidence" value="ECO:0007669"/>
    <property type="project" value="UniProtKB-UniRule"/>
</dbReference>
<dbReference type="GO" id="GO:0016887">
    <property type="term" value="F:ATP hydrolysis activity"/>
    <property type="evidence" value="ECO:0007669"/>
    <property type="project" value="InterPro"/>
</dbReference>
<dbReference type="GO" id="GO:0003688">
    <property type="term" value="F:DNA replication origin binding"/>
    <property type="evidence" value="ECO:0007669"/>
    <property type="project" value="UniProtKB-UniRule"/>
</dbReference>
<dbReference type="GO" id="GO:0008289">
    <property type="term" value="F:lipid binding"/>
    <property type="evidence" value="ECO:0007669"/>
    <property type="project" value="UniProtKB-KW"/>
</dbReference>
<dbReference type="GO" id="GO:0006270">
    <property type="term" value="P:DNA replication initiation"/>
    <property type="evidence" value="ECO:0007669"/>
    <property type="project" value="UniProtKB-UniRule"/>
</dbReference>
<dbReference type="GO" id="GO:0006275">
    <property type="term" value="P:regulation of DNA replication"/>
    <property type="evidence" value="ECO:0007669"/>
    <property type="project" value="UniProtKB-UniRule"/>
</dbReference>
<dbReference type="CDD" id="cd00009">
    <property type="entry name" value="AAA"/>
    <property type="match status" value="1"/>
</dbReference>
<dbReference type="CDD" id="cd06571">
    <property type="entry name" value="Bac_DnaA_C"/>
    <property type="match status" value="1"/>
</dbReference>
<dbReference type="FunFam" id="1.10.1750.10:FF:000002">
    <property type="entry name" value="Chromosomal replication initiator protein DnaA"/>
    <property type="match status" value="1"/>
</dbReference>
<dbReference type="FunFam" id="1.10.8.60:FF:000003">
    <property type="entry name" value="Chromosomal replication initiator protein DnaA"/>
    <property type="match status" value="1"/>
</dbReference>
<dbReference type="FunFam" id="3.40.50.300:FF:000150">
    <property type="entry name" value="Chromosomal replication initiator protein DnaA"/>
    <property type="match status" value="1"/>
</dbReference>
<dbReference type="Gene3D" id="1.10.1750.10">
    <property type="match status" value="1"/>
</dbReference>
<dbReference type="Gene3D" id="1.10.8.60">
    <property type="match status" value="1"/>
</dbReference>
<dbReference type="Gene3D" id="3.30.300.180">
    <property type="match status" value="1"/>
</dbReference>
<dbReference type="Gene3D" id="3.40.50.300">
    <property type="entry name" value="P-loop containing nucleotide triphosphate hydrolases"/>
    <property type="match status" value="1"/>
</dbReference>
<dbReference type="HAMAP" id="MF_00377">
    <property type="entry name" value="DnaA_bact"/>
    <property type="match status" value="1"/>
</dbReference>
<dbReference type="InterPro" id="IPR003593">
    <property type="entry name" value="AAA+_ATPase"/>
</dbReference>
<dbReference type="InterPro" id="IPR001957">
    <property type="entry name" value="Chromosome_initiator_DnaA"/>
</dbReference>
<dbReference type="InterPro" id="IPR020591">
    <property type="entry name" value="Chromosome_initiator_DnaA-like"/>
</dbReference>
<dbReference type="InterPro" id="IPR018312">
    <property type="entry name" value="Chromosome_initiator_DnaA_CS"/>
</dbReference>
<dbReference type="InterPro" id="IPR013159">
    <property type="entry name" value="DnaA_C"/>
</dbReference>
<dbReference type="InterPro" id="IPR013317">
    <property type="entry name" value="DnaA_dom"/>
</dbReference>
<dbReference type="InterPro" id="IPR024633">
    <property type="entry name" value="DnaA_N_dom"/>
</dbReference>
<dbReference type="InterPro" id="IPR038454">
    <property type="entry name" value="DnaA_N_sf"/>
</dbReference>
<dbReference type="InterPro" id="IPR027417">
    <property type="entry name" value="P-loop_NTPase"/>
</dbReference>
<dbReference type="InterPro" id="IPR010921">
    <property type="entry name" value="Trp_repressor/repl_initiator"/>
</dbReference>
<dbReference type="NCBIfam" id="TIGR00362">
    <property type="entry name" value="DnaA"/>
    <property type="match status" value="1"/>
</dbReference>
<dbReference type="NCBIfam" id="NF010686">
    <property type="entry name" value="PRK14086.1"/>
    <property type="match status" value="1"/>
</dbReference>
<dbReference type="PANTHER" id="PTHR30050">
    <property type="entry name" value="CHROMOSOMAL REPLICATION INITIATOR PROTEIN DNAA"/>
    <property type="match status" value="1"/>
</dbReference>
<dbReference type="PANTHER" id="PTHR30050:SF2">
    <property type="entry name" value="CHROMOSOMAL REPLICATION INITIATOR PROTEIN DNAA"/>
    <property type="match status" value="1"/>
</dbReference>
<dbReference type="Pfam" id="PF00308">
    <property type="entry name" value="Bac_DnaA"/>
    <property type="match status" value="1"/>
</dbReference>
<dbReference type="Pfam" id="PF08299">
    <property type="entry name" value="Bac_DnaA_C"/>
    <property type="match status" value="1"/>
</dbReference>
<dbReference type="Pfam" id="PF11638">
    <property type="entry name" value="DnaA_N"/>
    <property type="match status" value="1"/>
</dbReference>
<dbReference type="PRINTS" id="PR00051">
    <property type="entry name" value="DNAA"/>
</dbReference>
<dbReference type="SMART" id="SM00382">
    <property type="entry name" value="AAA"/>
    <property type="match status" value="1"/>
</dbReference>
<dbReference type="SMART" id="SM00760">
    <property type="entry name" value="Bac_DnaA_C"/>
    <property type="match status" value="1"/>
</dbReference>
<dbReference type="SUPFAM" id="SSF52540">
    <property type="entry name" value="P-loop containing nucleoside triphosphate hydrolases"/>
    <property type="match status" value="1"/>
</dbReference>
<dbReference type="SUPFAM" id="SSF48295">
    <property type="entry name" value="TrpR-like"/>
    <property type="match status" value="1"/>
</dbReference>
<dbReference type="PROSITE" id="PS01008">
    <property type="entry name" value="DNAA"/>
    <property type="match status" value="1"/>
</dbReference>
<organism>
    <name type="scientific">Thermoanaerobacter pseudethanolicus (strain ATCC 33223 / 39E)</name>
    <name type="common">Clostridium thermohydrosulfuricum</name>
    <dbReference type="NCBI Taxonomy" id="340099"/>
    <lineage>
        <taxon>Bacteria</taxon>
        <taxon>Bacillati</taxon>
        <taxon>Bacillota</taxon>
        <taxon>Clostridia</taxon>
        <taxon>Thermoanaerobacterales</taxon>
        <taxon>Thermoanaerobacteraceae</taxon>
        <taxon>Thermoanaerobacter</taxon>
    </lineage>
</organism>